<sequence>MIVDTSAVVALVQGERPHATLVAAALAGAHSPVMSAPTVAECLIVLTARHGPVARTIFERLRSEIGLSVSSFTAEHAAATQRAFLRYGKGRHRAALNFGDCMTYATAQLGHQPLLAVGNDFPQTDLEFRGVVGYWPGVA</sequence>
<keyword id="KW-0378">Hydrolase</keyword>
<keyword id="KW-0460">Magnesium</keyword>
<keyword id="KW-0479">Metal-binding</keyword>
<keyword id="KW-0540">Nuclease</keyword>
<keyword id="KW-1185">Reference proteome</keyword>
<keyword id="KW-1277">Toxin-antitoxin system</keyword>
<evidence type="ECO:0000255" key="1">
    <source>
        <dbReference type="HAMAP-Rule" id="MF_00265"/>
    </source>
</evidence>
<feature type="chain" id="PRO_0000221202" description="VapC ribonuclease Mb2004c">
    <location>
        <begin position="1"/>
        <end position="139"/>
    </location>
</feature>
<feature type="domain" description="PINc" evidence="1">
    <location>
        <begin position="1"/>
        <end position="127"/>
    </location>
</feature>
<feature type="binding site" evidence="1">
    <location>
        <position position="4"/>
    </location>
    <ligand>
        <name>Mg(2+)</name>
        <dbReference type="ChEBI" id="CHEBI:18420"/>
    </ligand>
</feature>
<feature type="binding site" evidence="1">
    <location>
        <position position="100"/>
    </location>
    <ligand>
        <name>Mg(2+)</name>
        <dbReference type="ChEBI" id="CHEBI:18420"/>
    </ligand>
</feature>
<organism>
    <name type="scientific">Mycobacterium bovis (strain ATCC BAA-935 / AF2122/97)</name>
    <dbReference type="NCBI Taxonomy" id="233413"/>
    <lineage>
        <taxon>Bacteria</taxon>
        <taxon>Bacillati</taxon>
        <taxon>Actinomycetota</taxon>
        <taxon>Actinomycetes</taxon>
        <taxon>Mycobacteriales</taxon>
        <taxon>Mycobacteriaceae</taxon>
        <taxon>Mycobacterium</taxon>
        <taxon>Mycobacterium tuberculosis complex</taxon>
    </lineage>
</organism>
<gene>
    <name type="ordered locus">BQ2027_MB2004C</name>
</gene>
<proteinExistence type="inferred from homology"/>
<protein>
    <recommendedName>
        <fullName>VapC ribonuclease Mb2004c</fullName>
        <shortName>RNase Mb2004c</shortName>
        <ecNumber evidence="1">3.1.-.-</ecNumber>
    </recommendedName>
    <alternativeName>
        <fullName>Toxin Mb2004c</fullName>
    </alternativeName>
</protein>
<reference key="1">
    <citation type="journal article" date="2003" name="Proc. Natl. Acad. Sci. U.S.A.">
        <title>The complete genome sequence of Mycobacterium bovis.</title>
        <authorList>
            <person name="Garnier T."/>
            <person name="Eiglmeier K."/>
            <person name="Camus J.-C."/>
            <person name="Medina N."/>
            <person name="Mansoor H."/>
            <person name="Pryor M."/>
            <person name="Duthoy S."/>
            <person name="Grondin S."/>
            <person name="Lacroix C."/>
            <person name="Monsempe C."/>
            <person name="Simon S."/>
            <person name="Harris B."/>
            <person name="Atkin R."/>
            <person name="Doggett J."/>
            <person name="Mayes R."/>
            <person name="Keating L."/>
            <person name="Wheeler P.R."/>
            <person name="Parkhill J."/>
            <person name="Barrell B.G."/>
            <person name="Cole S.T."/>
            <person name="Gordon S.V."/>
            <person name="Hewinson R.G."/>
        </authorList>
    </citation>
    <scope>NUCLEOTIDE SEQUENCE [LARGE SCALE GENOMIC DNA]</scope>
    <source>
        <strain>ATCC BAA-935 / AF2122/97</strain>
    </source>
</reference>
<reference key="2">
    <citation type="journal article" date="2017" name="Genome Announc.">
        <title>Updated reference genome sequence and annotation of Mycobacterium bovis AF2122/97.</title>
        <authorList>
            <person name="Malone K.M."/>
            <person name="Farrell D."/>
            <person name="Stuber T.P."/>
            <person name="Schubert O.T."/>
            <person name="Aebersold R."/>
            <person name="Robbe-Austerman S."/>
            <person name="Gordon S.V."/>
        </authorList>
    </citation>
    <scope>NUCLEOTIDE SEQUENCE [LARGE SCALE GENOMIC DNA]</scope>
    <scope>GENOME REANNOTATION</scope>
    <source>
        <strain>ATCC BAA-935 / AF2122/97</strain>
    </source>
</reference>
<dbReference type="EC" id="3.1.-.-" evidence="1"/>
<dbReference type="EMBL" id="LT708304">
    <property type="protein sequence ID" value="SIU00609.1"/>
    <property type="molecule type" value="Genomic_DNA"/>
</dbReference>
<dbReference type="RefSeq" id="NP_855654.1">
    <property type="nucleotide sequence ID" value="NC_002945.3"/>
</dbReference>
<dbReference type="RefSeq" id="WP_003409958.1">
    <property type="nucleotide sequence ID" value="NC_002945.4"/>
</dbReference>
<dbReference type="SMR" id="P0A653"/>
<dbReference type="KEGG" id="mbo:BQ2027_MB2004C"/>
<dbReference type="PATRIC" id="fig|233413.5.peg.2200"/>
<dbReference type="Proteomes" id="UP000001419">
    <property type="component" value="Chromosome"/>
</dbReference>
<dbReference type="GO" id="GO:0000287">
    <property type="term" value="F:magnesium ion binding"/>
    <property type="evidence" value="ECO:0007669"/>
    <property type="project" value="UniProtKB-UniRule"/>
</dbReference>
<dbReference type="GO" id="GO:0004540">
    <property type="term" value="F:RNA nuclease activity"/>
    <property type="evidence" value="ECO:0007669"/>
    <property type="project" value="InterPro"/>
</dbReference>
<dbReference type="CDD" id="cd09871">
    <property type="entry name" value="PIN_MtVapC28-VapC30-like"/>
    <property type="match status" value="1"/>
</dbReference>
<dbReference type="Gene3D" id="3.40.50.1010">
    <property type="entry name" value="5'-nuclease"/>
    <property type="match status" value="1"/>
</dbReference>
<dbReference type="HAMAP" id="MF_00265">
    <property type="entry name" value="VapC_Nob1"/>
    <property type="match status" value="1"/>
</dbReference>
<dbReference type="InterPro" id="IPR029060">
    <property type="entry name" value="PIN-like_dom_sf"/>
</dbReference>
<dbReference type="InterPro" id="IPR002716">
    <property type="entry name" value="PIN_dom"/>
</dbReference>
<dbReference type="InterPro" id="IPR050556">
    <property type="entry name" value="Type_II_TA_system_RNase"/>
</dbReference>
<dbReference type="InterPro" id="IPR022907">
    <property type="entry name" value="VapC_family"/>
</dbReference>
<dbReference type="PANTHER" id="PTHR33653">
    <property type="entry name" value="RIBONUCLEASE VAPC2"/>
    <property type="match status" value="1"/>
</dbReference>
<dbReference type="PANTHER" id="PTHR33653:SF1">
    <property type="entry name" value="RIBONUCLEASE VAPC2"/>
    <property type="match status" value="1"/>
</dbReference>
<dbReference type="Pfam" id="PF01850">
    <property type="entry name" value="PIN"/>
    <property type="match status" value="1"/>
</dbReference>
<dbReference type="SUPFAM" id="SSF88723">
    <property type="entry name" value="PIN domain-like"/>
    <property type="match status" value="1"/>
</dbReference>
<comment type="function">
    <text evidence="1">Toxic component of a type II toxin-antitoxin (TA) system. An RNase.</text>
</comment>
<comment type="cofactor">
    <cofactor evidence="1">
        <name>Mg(2+)</name>
        <dbReference type="ChEBI" id="CHEBI:18420"/>
    </cofactor>
</comment>
<comment type="similarity">
    <text evidence="1">Belongs to the PINc/VapC protein family.</text>
</comment>
<accession>P0A653</accession>
<accession>A0A1R3XZZ0</accession>
<accession>Q10874</accession>
<accession>X2BJH4</accession>
<name>VAPC6_MYCBO</name>